<name>HIG1A_HUMAN</name>
<reference key="1">
    <citation type="journal article" date="2000" name="Clin. Cancer Res.">
        <title>Epigenetic regulation of gene expression in cervical cancer cells by the tumor microenvironment.</title>
        <authorList>
            <person name="Denko N.C."/>
            <person name="Schindler C."/>
            <person name="Koong A."/>
            <person name="Laderoute K."/>
            <person name="Green C."/>
            <person name="Giaccia A.J."/>
        </authorList>
    </citation>
    <scope>NUCLEOTIDE SEQUENCE [MRNA] (ISOFORM 1)</scope>
    <scope>INDUCTION</scope>
    <source>
        <tissue>Cervix carcinoma</tissue>
    </source>
</reference>
<reference key="2">
    <citation type="journal article" date="2000" name="Genome Res.">
        <title>Cloning and functional analysis of cDNAs with open reading frames for 300 previously undefined genes expressed in CD34+ hematopoietic stem/progenitor cells.</title>
        <authorList>
            <person name="Zhang Q.-H."/>
            <person name="Ye M."/>
            <person name="Wu X.-Y."/>
            <person name="Ren S.-X."/>
            <person name="Zhao M."/>
            <person name="Zhao C.-J."/>
            <person name="Fu G."/>
            <person name="Shen Y."/>
            <person name="Fan H.-Y."/>
            <person name="Lu G."/>
            <person name="Zhong M."/>
            <person name="Xu X.-R."/>
            <person name="Han Z.-G."/>
            <person name="Zhang J.-W."/>
            <person name="Tao J."/>
            <person name="Huang Q.-H."/>
            <person name="Zhou J."/>
            <person name="Hu G.-X."/>
            <person name="Gu J."/>
            <person name="Chen S.-J."/>
            <person name="Chen Z."/>
        </authorList>
    </citation>
    <scope>NUCLEOTIDE SEQUENCE [LARGE SCALE MRNA] (ISOFORM 1)</scope>
    <source>
        <tissue>Umbilical cord blood</tissue>
    </source>
</reference>
<reference key="3">
    <citation type="journal article" date="2001" name="Genome Res.">
        <title>Towards a catalog of human genes and proteins: sequencing and analysis of 500 novel complete protein coding human cDNAs.</title>
        <authorList>
            <person name="Wiemann S."/>
            <person name="Weil B."/>
            <person name="Wellenreuther R."/>
            <person name="Gassenhuber J."/>
            <person name="Glassl S."/>
            <person name="Ansorge W."/>
            <person name="Boecher M."/>
            <person name="Bloecker H."/>
            <person name="Bauersachs S."/>
            <person name="Blum H."/>
            <person name="Lauber J."/>
            <person name="Duesterhoeft A."/>
            <person name="Beyer A."/>
            <person name="Koehrer K."/>
            <person name="Strack N."/>
            <person name="Mewes H.-W."/>
            <person name="Ottenwaelder B."/>
            <person name="Obermaier B."/>
            <person name="Tampe J."/>
            <person name="Heubner D."/>
            <person name="Wambutt R."/>
            <person name="Korn B."/>
            <person name="Klein M."/>
            <person name="Poustka A."/>
        </authorList>
    </citation>
    <scope>NUCLEOTIDE SEQUENCE [LARGE SCALE MRNA] (ISOFORM 1)</scope>
    <source>
        <tissue>Brain</tissue>
    </source>
</reference>
<reference key="4">
    <citation type="submission" date="2004-06" db="EMBL/GenBank/DDBJ databases">
        <title>Cloning of human full open reading frames in Gateway(TM) system entry vector (pDONR201).</title>
        <authorList>
            <person name="Ebert L."/>
            <person name="Schick M."/>
            <person name="Neubert P."/>
            <person name="Schatten R."/>
            <person name="Henze S."/>
            <person name="Korn B."/>
        </authorList>
    </citation>
    <scope>NUCLEOTIDE SEQUENCE [LARGE SCALE MRNA] (ISOFORM 1)</scope>
</reference>
<reference key="5">
    <citation type="journal article" date="2004" name="Genome Res.">
        <title>The status, quality, and expansion of the NIH full-length cDNA project: the Mammalian Gene Collection (MGC).</title>
        <authorList>
            <consortium name="The MGC Project Team"/>
        </authorList>
    </citation>
    <scope>NUCLEOTIDE SEQUENCE [LARGE SCALE MRNA] (ISOFORMS 1 AND 2)</scope>
    <source>
        <tissue>Bone marrow</tissue>
        <tissue>Brain</tissue>
        <tissue>Lung</tissue>
        <tissue>Skin</tissue>
    </source>
</reference>
<reference key="6">
    <citation type="submission" date="2009-03" db="UniProtKB">
        <authorList>
            <person name="Bienvenut W.V."/>
            <person name="Waridel P."/>
            <person name="Quadroni M."/>
        </authorList>
    </citation>
    <scope>PROTEIN SEQUENCE OF 2-19 AND 26-47</scope>
    <scope>CLEAVAGE OF INITIATOR METHIONINE</scope>
    <scope>ACETYLATION AT SER-2</scope>
    <scope>IDENTIFICATION BY MASS SPECTROMETRY</scope>
    <source>
        <tissue>Embryonic kidney</tissue>
    </source>
</reference>
<reference key="7">
    <citation type="journal article" date="2011" name="BMC Syst. Biol.">
        <title>Initial characterization of the human central proteome.</title>
        <authorList>
            <person name="Burkard T.R."/>
            <person name="Planyavsky M."/>
            <person name="Kaupe I."/>
            <person name="Breitwieser F.P."/>
            <person name="Buerckstuemmer T."/>
            <person name="Bennett K.L."/>
            <person name="Superti-Furga G."/>
            <person name="Colinge J."/>
        </authorList>
    </citation>
    <scope>IDENTIFICATION BY MASS SPECTROMETRY [LARGE SCALE ANALYSIS]</scope>
</reference>
<reference key="8">
    <citation type="journal article" date="2012" name="Cell Metab.">
        <title>Rcf1 mediates cytochrome oxidase assembly and respirasome formation, revealing heterogeneity of the enzyme complex.</title>
        <authorList>
            <person name="Vukotic M."/>
            <person name="Oeljeklaus S."/>
            <person name="Wiese S."/>
            <person name="Vogtle F.N."/>
            <person name="Meisinger C."/>
            <person name="Meyer H.E."/>
            <person name="Zieseniss A."/>
            <person name="Katschinski D.M."/>
            <person name="Jans D.C."/>
            <person name="Jakobs S."/>
            <person name="Warscheid B."/>
            <person name="Rehling P."/>
            <person name="Deckers M."/>
        </authorList>
    </citation>
    <scope>FUNCTION</scope>
    <scope>SUBUNIT</scope>
    <scope>SUBCELLULAR LOCATION</scope>
</reference>
<reference key="9">
    <citation type="journal article" date="2012" name="Nat. Methods">
        <title>Facile backbone structure determination of human membrane proteins by NMR spectroscopy.</title>
        <authorList>
            <person name="Klammt C."/>
            <person name="Maslennikov I."/>
            <person name="Bayrhuber M."/>
            <person name="Eichmann C."/>
            <person name="Vajpai N."/>
            <person name="Chiu E.J."/>
            <person name="Blain K.Y."/>
            <person name="Esquivies L."/>
            <person name="Kwon J.H."/>
            <person name="Balana B."/>
            <person name="Pieper U."/>
            <person name="Sali A."/>
            <person name="Slesinger P.A."/>
            <person name="Kwiatkowski W."/>
            <person name="Riek R."/>
            <person name="Choe S."/>
        </authorList>
    </citation>
    <scope>STRUCTURE BY NMR</scope>
</reference>
<gene>
    <name type="primary">HIGD1A</name>
    <name type="synonym">HIG1</name>
    <name type="ORF">HSPC010</name>
</gene>
<feature type="initiator methionine" description="Removed" evidence="5">
    <location>
        <position position="1"/>
    </location>
</feature>
<feature type="chain" id="PRO_0000215770" description="HIG1 domain family member 1A, mitochondrial">
    <location>
        <begin position="2"/>
        <end position="93"/>
    </location>
</feature>
<feature type="transmembrane region" description="Helical" evidence="2">
    <location>
        <begin position="26"/>
        <end position="46"/>
    </location>
</feature>
<feature type="transmembrane region" description="Helical" evidence="2">
    <location>
        <begin position="60"/>
        <end position="80"/>
    </location>
</feature>
<feature type="domain" description="HIG1" evidence="2">
    <location>
        <begin position="1"/>
        <end position="93"/>
    </location>
</feature>
<feature type="modified residue" description="N-acetylserine" evidence="5">
    <location>
        <position position="2"/>
    </location>
</feature>
<feature type="modified residue" description="Phosphoserine" evidence="1">
    <location>
        <position position="8"/>
    </location>
</feature>
<feature type="splice variant" id="VSP_041211" description="In isoform 2." evidence="6">
    <original>M</original>
    <variation>MEQKLVEEILQAITM</variation>
    <location>
        <position position="1"/>
    </location>
</feature>
<feature type="sequence conflict" description="In Ref. 3; CAB53686 and 4; CAG33666." evidence="7" ref="3 4">
    <original>K</original>
    <variation>E</variation>
    <location>
        <position position="92"/>
    </location>
</feature>
<feature type="helix" evidence="9">
    <location>
        <begin position="17"/>
        <end position="21"/>
    </location>
</feature>
<feature type="helix" evidence="9">
    <location>
        <begin position="30"/>
        <end position="48"/>
    </location>
</feature>
<feature type="strand" evidence="9">
    <location>
        <begin position="49"/>
        <end position="53"/>
    </location>
</feature>
<feature type="helix" evidence="9">
    <location>
        <begin position="65"/>
        <end position="81"/>
    </location>
</feature>
<dbReference type="EMBL" id="AF145385">
    <property type="protein sequence ID" value="AAD33954.1"/>
    <property type="molecule type" value="mRNA"/>
</dbReference>
<dbReference type="EMBL" id="AF077034">
    <property type="protein sequence ID" value="AAD27767.1"/>
    <property type="molecule type" value="mRNA"/>
</dbReference>
<dbReference type="EMBL" id="AL110233">
    <property type="protein sequence ID" value="CAB53686.1"/>
    <property type="molecule type" value="mRNA"/>
</dbReference>
<dbReference type="EMBL" id="CR457385">
    <property type="protein sequence ID" value="CAG33666.1"/>
    <property type="molecule type" value="mRNA"/>
</dbReference>
<dbReference type="EMBL" id="BC000601">
    <property type="protein sequence ID" value="AAH00601.1"/>
    <property type="molecule type" value="mRNA"/>
</dbReference>
<dbReference type="EMBL" id="BC009583">
    <property type="protein sequence ID" value="AAH09583.1"/>
    <property type="molecule type" value="mRNA"/>
</dbReference>
<dbReference type="EMBL" id="BC009594">
    <property type="protein sequence ID" value="AAH09594.1"/>
    <property type="molecule type" value="mRNA"/>
</dbReference>
<dbReference type="EMBL" id="BC070277">
    <property type="protein sequence ID" value="AAH70277.1"/>
    <property type="molecule type" value="mRNA"/>
</dbReference>
<dbReference type="EMBL" id="BG400624">
    <property type="status" value="NOT_ANNOTATED_CDS"/>
    <property type="molecule type" value="mRNA"/>
</dbReference>
<dbReference type="CCDS" id="CCDS43073.1">
    <molecule id="Q9Y241-1"/>
</dbReference>
<dbReference type="CCDS" id="CCDS46806.1">
    <molecule id="Q9Y241-2"/>
</dbReference>
<dbReference type="PIR" id="T14766">
    <property type="entry name" value="T14766"/>
</dbReference>
<dbReference type="RefSeq" id="NP_001093138.1">
    <molecule id="Q9Y241-2"/>
    <property type="nucleotide sequence ID" value="NM_001099668.2"/>
</dbReference>
<dbReference type="RefSeq" id="NP_001093139.1">
    <molecule id="Q9Y241-1"/>
    <property type="nucleotide sequence ID" value="NM_001099669.2"/>
</dbReference>
<dbReference type="RefSeq" id="NP_054775.2">
    <molecule id="Q9Y241-1"/>
    <property type="nucleotide sequence ID" value="NM_014056.4"/>
</dbReference>
<dbReference type="PDB" id="2LOM">
    <property type="method" value="NMR"/>
    <property type="chains" value="A=1-93"/>
</dbReference>
<dbReference type="PDBsum" id="2LOM"/>
<dbReference type="BMRB" id="Q9Y241"/>
<dbReference type="SMR" id="Q9Y241"/>
<dbReference type="BioGRID" id="117472">
    <property type="interactions" value="113"/>
</dbReference>
<dbReference type="CORUM" id="Q9Y241"/>
<dbReference type="FunCoup" id="Q9Y241">
    <property type="interactions" value="994"/>
</dbReference>
<dbReference type="IntAct" id="Q9Y241">
    <property type="interactions" value="38"/>
</dbReference>
<dbReference type="MINT" id="Q9Y241"/>
<dbReference type="STRING" id="9606.ENSP00000398064"/>
<dbReference type="GlyGen" id="Q9Y241">
    <property type="glycosylation" value="1 site, 1 O-linked glycan (1 site)"/>
</dbReference>
<dbReference type="iPTMnet" id="Q9Y241"/>
<dbReference type="PhosphoSitePlus" id="Q9Y241"/>
<dbReference type="SwissPalm" id="Q9Y241"/>
<dbReference type="BioMuta" id="HIGD1A"/>
<dbReference type="DMDM" id="74753465"/>
<dbReference type="jPOST" id="Q9Y241"/>
<dbReference type="MassIVE" id="Q9Y241"/>
<dbReference type="PaxDb" id="9606-ENSP00000398064"/>
<dbReference type="PeptideAtlas" id="Q9Y241"/>
<dbReference type="ProteomicsDB" id="85638">
    <molecule id="Q9Y241-1"/>
</dbReference>
<dbReference type="ProteomicsDB" id="85639">
    <molecule id="Q9Y241-2"/>
</dbReference>
<dbReference type="Pumba" id="Q9Y241"/>
<dbReference type="TopDownProteomics" id="Q9Y241-1">
    <molecule id="Q9Y241-1"/>
</dbReference>
<dbReference type="TopDownProteomics" id="Q9Y241-2">
    <molecule id="Q9Y241-2"/>
</dbReference>
<dbReference type="Antibodypedia" id="45649">
    <property type="antibodies" value="123 antibodies from 29 providers"/>
</dbReference>
<dbReference type="DNASU" id="25994"/>
<dbReference type="Ensembl" id="ENST00000321331.12">
    <molecule id="Q9Y241-1"/>
    <property type="protein sequence ID" value="ENSP00000319393.7"/>
    <property type="gene ID" value="ENSG00000181061.14"/>
</dbReference>
<dbReference type="Ensembl" id="ENST00000418900.6">
    <molecule id="Q9Y241-1"/>
    <property type="protein sequence ID" value="ENSP00000402160.2"/>
    <property type="gene ID" value="ENSG00000181061.14"/>
</dbReference>
<dbReference type="Ensembl" id="ENST00000452906.3">
    <molecule id="Q9Y241-2"/>
    <property type="protein sequence ID" value="ENSP00000398064.2"/>
    <property type="gene ID" value="ENSG00000181061.14"/>
</dbReference>
<dbReference type="GeneID" id="25994"/>
<dbReference type="KEGG" id="hsa:25994"/>
<dbReference type="MANE-Select" id="ENST00000321331.12">
    <property type="protein sequence ID" value="ENSP00000319393.7"/>
    <property type="RefSeq nucleotide sequence ID" value="NM_014056.4"/>
    <property type="RefSeq protein sequence ID" value="NP_054775.2"/>
</dbReference>
<dbReference type="UCSC" id="uc003cma.5">
    <molecule id="Q9Y241-1"/>
    <property type="organism name" value="human"/>
</dbReference>
<dbReference type="AGR" id="HGNC:29527"/>
<dbReference type="CTD" id="25994"/>
<dbReference type="DisGeNET" id="25994"/>
<dbReference type="GeneCards" id="HIGD1A"/>
<dbReference type="HGNC" id="HGNC:29527">
    <property type="gene designation" value="HIGD1A"/>
</dbReference>
<dbReference type="HPA" id="ENSG00000181061">
    <property type="expression patterns" value="Low tissue specificity"/>
</dbReference>
<dbReference type="MIM" id="618623">
    <property type="type" value="gene"/>
</dbReference>
<dbReference type="neXtProt" id="NX_Q9Y241"/>
<dbReference type="OpenTargets" id="ENSG00000181061"/>
<dbReference type="PharmGKB" id="PA142671681"/>
<dbReference type="VEuPathDB" id="HostDB:ENSG00000181061"/>
<dbReference type="eggNOG" id="KOG4431">
    <property type="taxonomic scope" value="Eukaryota"/>
</dbReference>
<dbReference type="GeneTree" id="ENSGT00940000154276"/>
<dbReference type="HOGENOM" id="CLU_153308_2_0_1"/>
<dbReference type="InParanoid" id="Q9Y241"/>
<dbReference type="OrthoDB" id="10003563at2759"/>
<dbReference type="PAN-GO" id="Q9Y241">
    <property type="GO annotations" value="3 GO annotations based on evolutionary models"/>
</dbReference>
<dbReference type="PhylomeDB" id="Q9Y241"/>
<dbReference type="TreeFam" id="TF314628"/>
<dbReference type="PathwayCommons" id="Q9Y241"/>
<dbReference type="Reactome" id="R-HSA-1234158">
    <property type="pathway name" value="Regulation of gene expression by Hypoxia-inducible Factor"/>
</dbReference>
<dbReference type="Reactome" id="R-HSA-9864848">
    <property type="pathway name" value="Complex IV assembly"/>
</dbReference>
<dbReference type="SignaLink" id="Q9Y241"/>
<dbReference type="BioGRID-ORCS" id="25994">
    <property type="hits" value="76 hits in 1114 CRISPR screens"/>
</dbReference>
<dbReference type="CD-CODE" id="FB4E32DD">
    <property type="entry name" value="Presynaptic clusters and postsynaptic densities"/>
</dbReference>
<dbReference type="ChiTaRS" id="HIGD1A">
    <property type="organism name" value="human"/>
</dbReference>
<dbReference type="EvolutionaryTrace" id="Q9Y241"/>
<dbReference type="GeneWiki" id="HIGD1A"/>
<dbReference type="GenomeRNAi" id="25994"/>
<dbReference type="Pharos" id="Q9Y241">
    <property type="development level" value="Tbio"/>
</dbReference>
<dbReference type="PRO" id="PR:Q9Y241"/>
<dbReference type="Proteomes" id="UP000005640">
    <property type="component" value="Chromosome 3"/>
</dbReference>
<dbReference type="RNAct" id="Q9Y241">
    <property type="molecule type" value="protein"/>
</dbReference>
<dbReference type="Bgee" id="ENSG00000181061">
    <property type="expression patterns" value="Expressed in rectum and 162 other cell types or tissues"/>
</dbReference>
<dbReference type="ExpressionAtlas" id="Q9Y241">
    <property type="expression patterns" value="baseline and differential"/>
</dbReference>
<dbReference type="GO" id="GO:0005743">
    <property type="term" value="C:mitochondrial inner membrane"/>
    <property type="evidence" value="ECO:0000304"/>
    <property type="project" value="Reactome"/>
</dbReference>
<dbReference type="GO" id="GO:0005739">
    <property type="term" value="C:mitochondrion"/>
    <property type="evidence" value="ECO:0000314"/>
    <property type="project" value="HPA"/>
</dbReference>
<dbReference type="GO" id="GO:0005654">
    <property type="term" value="C:nucleoplasm"/>
    <property type="evidence" value="ECO:0000314"/>
    <property type="project" value="HPA"/>
</dbReference>
<dbReference type="GO" id="GO:0032991">
    <property type="term" value="C:protein-containing complex"/>
    <property type="evidence" value="ECO:0000314"/>
    <property type="project" value="LIFEdb"/>
</dbReference>
<dbReference type="GO" id="GO:0042149">
    <property type="term" value="P:cellular response to glucose starvation"/>
    <property type="evidence" value="ECO:0007669"/>
    <property type="project" value="Ensembl"/>
</dbReference>
<dbReference type="GO" id="GO:0071456">
    <property type="term" value="P:cellular response to hypoxia"/>
    <property type="evidence" value="ECO:0007669"/>
    <property type="project" value="Ensembl"/>
</dbReference>
<dbReference type="GO" id="GO:0097250">
    <property type="term" value="P:mitochondrial respirasome assembly"/>
    <property type="evidence" value="ECO:0000318"/>
    <property type="project" value="GO_Central"/>
</dbReference>
<dbReference type="GO" id="GO:0043066">
    <property type="term" value="P:negative regulation of apoptotic process"/>
    <property type="evidence" value="ECO:0000314"/>
    <property type="project" value="MGI"/>
</dbReference>
<dbReference type="GO" id="GO:0090201">
    <property type="term" value="P:negative regulation of release of cytochrome c from mitochondria"/>
    <property type="evidence" value="ECO:0007669"/>
    <property type="project" value="Ensembl"/>
</dbReference>
<dbReference type="Gene3D" id="6.10.140.1320">
    <property type="match status" value="1"/>
</dbReference>
<dbReference type="InterPro" id="IPR007667">
    <property type="entry name" value="Hypoxia_induced_domain"/>
</dbReference>
<dbReference type="InterPro" id="IPR050355">
    <property type="entry name" value="RCF1"/>
</dbReference>
<dbReference type="PANTHER" id="PTHR12297:SF5">
    <property type="entry name" value="HIG1 DOMAIN FAMILY MEMBER 1A, MITOCHONDRIAL"/>
    <property type="match status" value="1"/>
</dbReference>
<dbReference type="PANTHER" id="PTHR12297">
    <property type="entry name" value="HYPOXIA-INDUCBILE GENE 1 HIG1 -RELATED"/>
    <property type="match status" value="1"/>
</dbReference>
<dbReference type="Pfam" id="PF04588">
    <property type="entry name" value="HIG_1_N"/>
    <property type="match status" value="1"/>
</dbReference>
<dbReference type="PROSITE" id="PS51503">
    <property type="entry name" value="HIG1"/>
    <property type="match status" value="1"/>
</dbReference>
<proteinExistence type="evidence at protein level"/>
<comment type="function">
    <text evidence="4">Proposed subunit of cytochrome c oxidase (COX, complex IV), which is the terminal component of the mitochondrial respiratory chain that catalyzes the reduction of oxygen to water. May play a role in the assembly of respiratory supercomplexes.</text>
</comment>
<comment type="subunit">
    <text evidence="4">Associates with cytochrome c oxidase (COX, complex IV); proposed complex component. Also associates with respiratory chain supercomplexes.</text>
</comment>
<comment type="subcellular location">
    <subcellularLocation>
        <location evidence="2 4">Mitochondrion membrane</location>
        <topology evidence="2 4">Multi-pass membrane protein</topology>
    </subcellularLocation>
    <subcellularLocation>
        <location evidence="8">Mitochondrion inner membrane</location>
    </subcellularLocation>
</comment>
<comment type="alternative products">
    <event type="alternative splicing"/>
    <isoform>
        <id>Q9Y241-1</id>
        <name>1</name>
        <sequence type="displayed"/>
    </isoform>
    <isoform>
        <id>Q9Y241-2</id>
        <name>2</name>
        <sequence type="described" ref="VSP_041211"/>
    </isoform>
</comment>
<comment type="induction">
    <text evidence="3">By hypoxia.</text>
</comment>
<comment type="sequence caution" evidence="7">
    <conflict type="frameshift">
        <sequence resource="EMBL" id="BG400624"/>
    </conflict>
</comment>
<evidence type="ECO:0000250" key="1">
    <source>
        <dbReference type="UniProtKB" id="Q8VH49"/>
    </source>
</evidence>
<evidence type="ECO:0000255" key="2">
    <source>
        <dbReference type="PROSITE-ProRule" id="PRU00836"/>
    </source>
</evidence>
<evidence type="ECO:0000269" key="3">
    <source>
    </source>
</evidence>
<evidence type="ECO:0000269" key="4">
    <source>
    </source>
</evidence>
<evidence type="ECO:0000269" key="5">
    <source ref="6"/>
</evidence>
<evidence type="ECO:0000303" key="6">
    <source>
    </source>
</evidence>
<evidence type="ECO:0000305" key="7"/>
<evidence type="ECO:0000305" key="8">
    <source>
    </source>
</evidence>
<evidence type="ECO:0007829" key="9">
    <source>
        <dbReference type="PDB" id="2LOM"/>
    </source>
</evidence>
<protein>
    <recommendedName>
        <fullName>HIG1 domain family member 1A, mitochondrial</fullName>
    </recommendedName>
    <alternativeName>
        <fullName>Hypoxia-inducible gene 1 protein</fullName>
    </alternativeName>
    <alternativeName>
        <fullName>RCF1 homolog A</fullName>
        <shortName>RCF1a</shortName>
    </alternativeName>
</protein>
<organism>
    <name type="scientific">Homo sapiens</name>
    <name type="common">Human</name>
    <dbReference type="NCBI Taxonomy" id="9606"/>
    <lineage>
        <taxon>Eukaryota</taxon>
        <taxon>Metazoa</taxon>
        <taxon>Chordata</taxon>
        <taxon>Craniata</taxon>
        <taxon>Vertebrata</taxon>
        <taxon>Euteleostomi</taxon>
        <taxon>Mammalia</taxon>
        <taxon>Eutheria</taxon>
        <taxon>Euarchontoglires</taxon>
        <taxon>Primates</taxon>
        <taxon>Haplorrhini</taxon>
        <taxon>Catarrhini</taxon>
        <taxon>Hominidae</taxon>
        <taxon>Homo</taxon>
    </lineage>
</organism>
<sequence>MSTDTGVSLPSYEEDQGSKLIRKAKEAPFVPVGIAGFAAIVAYGLYKLKSRGNTKMSIHLIHMRVAAQGFVVGAMTVGMGYSMYREFWAKPKP</sequence>
<keyword id="KW-0002">3D-structure</keyword>
<keyword id="KW-0007">Acetylation</keyword>
<keyword id="KW-0025">Alternative splicing</keyword>
<keyword id="KW-0903">Direct protein sequencing</keyword>
<keyword id="KW-0249">Electron transport</keyword>
<keyword id="KW-0472">Membrane</keyword>
<keyword id="KW-0496">Mitochondrion</keyword>
<keyword id="KW-0999">Mitochondrion inner membrane</keyword>
<keyword id="KW-0597">Phosphoprotein</keyword>
<keyword id="KW-1267">Proteomics identification</keyword>
<keyword id="KW-1185">Reference proteome</keyword>
<keyword id="KW-0679">Respiratory chain</keyword>
<keyword id="KW-0346">Stress response</keyword>
<keyword id="KW-0812">Transmembrane</keyword>
<keyword id="KW-1133">Transmembrane helix</keyword>
<keyword id="KW-0813">Transport</keyword>
<accession>Q9Y241</accession>
<accession>Q9UFZ2</accession>